<accession>O83990</accession>
<proteinExistence type="inferred from homology"/>
<evidence type="ECO:0000250" key="1">
    <source>
        <dbReference type="UniProtKB" id="P12758"/>
    </source>
</evidence>
<evidence type="ECO:0000305" key="2"/>
<gene>
    <name type="primary">udp</name>
    <name type="ordered locus">TP_1027</name>
</gene>
<name>UDP_TREPA</name>
<keyword id="KW-0963">Cytoplasm</keyword>
<keyword id="KW-0328">Glycosyltransferase</keyword>
<keyword id="KW-1185">Reference proteome</keyword>
<keyword id="KW-0808">Transferase</keyword>
<organism>
    <name type="scientific">Treponema pallidum (strain Nichols)</name>
    <dbReference type="NCBI Taxonomy" id="243276"/>
    <lineage>
        <taxon>Bacteria</taxon>
        <taxon>Pseudomonadati</taxon>
        <taxon>Spirochaetota</taxon>
        <taxon>Spirochaetia</taxon>
        <taxon>Spirochaetales</taxon>
        <taxon>Treponemataceae</taxon>
        <taxon>Treponema</taxon>
    </lineage>
</organism>
<sequence length="258" mass="27920">MKLVYSTDCEYHIGLKASDIGHYVILPGDPARSEKIAQHFSHPHKVGHNREYVTYTGTLCETPVSVMSTGIGGPSTAIGVEELIHLGAHTFIRVGTSGGMQPDILAGTVVIATGAIRFEGTSKEYAPVEFPAVPDFTVTAALKHAAEDVQVRHALGVVQCKDNFYGQHSPHTMPVHAELTQKWHAWIACNTLASEMESAALFVLGSVRRVRTGAVLLVIGNQTRRAQGLEDIQVHDTENAIRVAVEAVKLLITQDSPR</sequence>
<feature type="chain" id="PRO_0000063190" description="Uridine phosphorylase">
    <location>
        <begin position="1"/>
        <end position="258"/>
    </location>
</feature>
<protein>
    <recommendedName>
        <fullName evidence="1">Uridine phosphorylase</fullName>
        <shortName evidence="1">UPase</shortName>
        <shortName evidence="1">UrdPase</shortName>
        <ecNumber evidence="1">2.4.2.3</ecNumber>
    </recommendedName>
</protein>
<reference key="1">
    <citation type="journal article" date="1998" name="Science">
        <title>Complete genome sequence of Treponema pallidum, the syphilis spirochete.</title>
        <authorList>
            <person name="Fraser C.M."/>
            <person name="Norris S.J."/>
            <person name="Weinstock G.M."/>
            <person name="White O."/>
            <person name="Sutton G.G."/>
            <person name="Dodson R.J."/>
            <person name="Gwinn M.L."/>
            <person name="Hickey E.K."/>
            <person name="Clayton R.A."/>
            <person name="Ketchum K.A."/>
            <person name="Sodergren E."/>
            <person name="Hardham J.M."/>
            <person name="McLeod M.P."/>
            <person name="Salzberg S.L."/>
            <person name="Peterson J.D."/>
            <person name="Khalak H.G."/>
            <person name="Richardson D.L."/>
            <person name="Howell J.K."/>
            <person name="Chidambaram M."/>
            <person name="Utterback T.R."/>
            <person name="McDonald L.A."/>
            <person name="Artiach P."/>
            <person name="Bowman C."/>
            <person name="Cotton M.D."/>
            <person name="Fujii C."/>
            <person name="Garland S.A."/>
            <person name="Hatch B."/>
            <person name="Horst K."/>
            <person name="Roberts K.M."/>
            <person name="Sandusky M."/>
            <person name="Weidman J.F."/>
            <person name="Smith H.O."/>
            <person name="Venter J.C."/>
        </authorList>
    </citation>
    <scope>NUCLEOTIDE SEQUENCE [LARGE SCALE GENOMIC DNA]</scope>
    <source>
        <strain>Nichols</strain>
    </source>
</reference>
<dbReference type="EC" id="2.4.2.3" evidence="1"/>
<dbReference type="EMBL" id="AE000520">
    <property type="protein sequence ID" value="AAC65977.1"/>
    <property type="molecule type" value="Genomic_DNA"/>
</dbReference>
<dbReference type="PIR" id="F71251">
    <property type="entry name" value="F71251"/>
</dbReference>
<dbReference type="RefSeq" id="WP_010882471.1">
    <property type="nucleotide sequence ID" value="NC_021490.2"/>
</dbReference>
<dbReference type="SMR" id="O83990"/>
<dbReference type="STRING" id="243276.TP_1027"/>
<dbReference type="EnsemblBacteria" id="AAC65977">
    <property type="protein sequence ID" value="AAC65977"/>
    <property type="gene ID" value="TP_1027"/>
</dbReference>
<dbReference type="GeneID" id="93876774"/>
<dbReference type="KEGG" id="tpa:TP_1027"/>
<dbReference type="KEGG" id="tpw:TPANIC_1027"/>
<dbReference type="eggNOG" id="COG2820">
    <property type="taxonomic scope" value="Bacteria"/>
</dbReference>
<dbReference type="HOGENOM" id="CLU_068457_0_0_12"/>
<dbReference type="OrthoDB" id="9772602at2"/>
<dbReference type="UniPathway" id="UPA00574">
    <property type="reaction ID" value="UER00633"/>
</dbReference>
<dbReference type="Proteomes" id="UP000000811">
    <property type="component" value="Chromosome"/>
</dbReference>
<dbReference type="GO" id="GO:0005829">
    <property type="term" value="C:cytosol"/>
    <property type="evidence" value="ECO:0007669"/>
    <property type="project" value="TreeGrafter"/>
</dbReference>
<dbReference type="GO" id="GO:0004850">
    <property type="term" value="F:uridine phosphorylase activity"/>
    <property type="evidence" value="ECO:0007669"/>
    <property type="project" value="UniProtKB-EC"/>
</dbReference>
<dbReference type="GO" id="GO:0009164">
    <property type="term" value="P:nucleoside catabolic process"/>
    <property type="evidence" value="ECO:0007669"/>
    <property type="project" value="UniProtKB-ARBA"/>
</dbReference>
<dbReference type="GO" id="GO:0009166">
    <property type="term" value="P:nucleotide catabolic process"/>
    <property type="evidence" value="ECO:0007669"/>
    <property type="project" value="InterPro"/>
</dbReference>
<dbReference type="GO" id="GO:0044206">
    <property type="term" value="P:UMP salvage"/>
    <property type="evidence" value="ECO:0007669"/>
    <property type="project" value="UniProtKB-UniPathway"/>
</dbReference>
<dbReference type="CDD" id="cd17767">
    <property type="entry name" value="UP_EcUdp-like"/>
    <property type="match status" value="1"/>
</dbReference>
<dbReference type="Gene3D" id="3.40.50.1580">
    <property type="entry name" value="Nucleoside phosphorylase domain"/>
    <property type="match status" value="1"/>
</dbReference>
<dbReference type="InterPro" id="IPR018016">
    <property type="entry name" value="Nucleoside_phosphorylase_CS"/>
</dbReference>
<dbReference type="InterPro" id="IPR000845">
    <property type="entry name" value="Nucleoside_phosphorylase_d"/>
</dbReference>
<dbReference type="InterPro" id="IPR035994">
    <property type="entry name" value="Nucleoside_phosphorylase_sf"/>
</dbReference>
<dbReference type="InterPro" id="IPR010058">
    <property type="entry name" value="Uridine_phosphorylase"/>
</dbReference>
<dbReference type="NCBIfam" id="TIGR01718">
    <property type="entry name" value="Uridine-psphlse"/>
    <property type="match status" value="1"/>
</dbReference>
<dbReference type="PANTHER" id="PTHR43691:SF11">
    <property type="entry name" value="FI09636P-RELATED"/>
    <property type="match status" value="1"/>
</dbReference>
<dbReference type="PANTHER" id="PTHR43691">
    <property type="entry name" value="URIDINE PHOSPHORYLASE"/>
    <property type="match status" value="1"/>
</dbReference>
<dbReference type="Pfam" id="PF01048">
    <property type="entry name" value="PNP_UDP_1"/>
    <property type="match status" value="1"/>
</dbReference>
<dbReference type="SUPFAM" id="SSF53167">
    <property type="entry name" value="Purine and uridine phosphorylases"/>
    <property type="match status" value="1"/>
</dbReference>
<dbReference type="PROSITE" id="PS01232">
    <property type="entry name" value="PNP_UDP_1"/>
    <property type="match status" value="1"/>
</dbReference>
<comment type="function">
    <text evidence="1">Catalyzes the reversible phosphorylytic cleavage of uridine to uracil and ribose-1-phosphate.</text>
</comment>
<comment type="catalytic activity">
    <reaction evidence="1">
        <text>uridine + phosphate = alpha-D-ribose 1-phosphate + uracil</text>
        <dbReference type="Rhea" id="RHEA:24388"/>
        <dbReference type="ChEBI" id="CHEBI:16704"/>
        <dbReference type="ChEBI" id="CHEBI:17568"/>
        <dbReference type="ChEBI" id="CHEBI:43474"/>
        <dbReference type="ChEBI" id="CHEBI:57720"/>
        <dbReference type="EC" id="2.4.2.3"/>
    </reaction>
</comment>
<comment type="pathway">
    <text>Pyrimidine metabolism; UMP biosynthesis via salvage pathway; uracil from uridine (phosphorylase route): step 1/1.</text>
</comment>
<comment type="subcellular location">
    <subcellularLocation>
        <location evidence="1">Cytoplasm</location>
    </subcellularLocation>
</comment>
<comment type="similarity">
    <text evidence="2">Belongs to the PNP/UDP phosphorylase family.</text>
</comment>